<keyword id="KW-0007">Acetylation</keyword>
<keyword id="KW-0117">Actin capping</keyword>
<keyword id="KW-0009">Actin-binding</keyword>
<keyword id="KW-0597">Phosphoprotein</keyword>
<keyword id="KW-1185">Reference proteome</keyword>
<evidence type="ECO:0000250" key="1"/>
<evidence type="ECO:0000250" key="2">
    <source>
        <dbReference type="UniProtKB" id="P47755"/>
    </source>
</evidence>
<evidence type="ECO:0000305" key="3"/>
<protein>
    <recommendedName>
        <fullName>F-actin-capping protein subunit alpha-2</fullName>
    </recommendedName>
    <alternativeName>
        <fullName>CapZ alpha-2</fullName>
    </alternativeName>
</protein>
<accession>Q5R4P6</accession>
<accession>Q2IBD9</accession>
<gene>
    <name type="primary">CAPZA2</name>
</gene>
<dbReference type="EMBL" id="CR861199">
    <property type="protein sequence ID" value="CAH93270.1"/>
    <property type="molecule type" value="mRNA"/>
</dbReference>
<dbReference type="EMBL" id="DP000026">
    <property type="protein sequence ID" value="ABC87461.1"/>
    <property type="molecule type" value="Genomic_DNA"/>
</dbReference>
<dbReference type="RefSeq" id="NP_001126923.1">
    <property type="nucleotide sequence ID" value="NM_001133451.1"/>
</dbReference>
<dbReference type="SMR" id="Q5R4P6"/>
<dbReference type="FunCoup" id="Q5R4P6">
    <property type="interactions" value="1982"/>
</dbReference>
<dbReference type="STRING" id="9601.ENSPPYP00000020107"/>
<dbReference type="Ensembl" id="ENSPPYT00000042508.1">
    <property type="protein sequence ID" value="ENSPPYP00000026413.1"/>
    <property type="gene ID" value="ENSPPYG00000017933.3"/>
</dbReference>
<dbReference type="GeneID" id="100173940"/>
<dbReference type="KEGG" id="pon:100173940"/>
<dbReference type="CTD" id="830"/>
<dbReference type="eggNOG" id="KOG0836">
    <property type="taxonomic scope" value="Eukaryota"/>
</dbReference>
<dbReference type="GeneTree" id="ENSGT00950000183119"/>
<dbReference type="HOGENOM" id="CLU_045161_0_0_1"/>
<dbReference type="InParanoid" id="Q5R4P6"/>
<dbReference type="OMA" id="VACIEDH"/>
<dbReference type="OrthoDB" id="340550at2759"/>
<dbReference type="TreeFam" id="TF314822"/>
<dbReference type="Proteomes" id="UP000001595">
    <property type="component" value="Chromosome 7"/>
</dbReference>
<dbReference type="GO" id="GO:0005903">
    <property type="term" value="C:brush border"/>
    <property type="evidence" value="ECO:0007669"/>
    <property type="project" value="Ensembl"/>
</dbReference>
<dbReference type="GO" id="GO:0030863">
    <property type="term" value="C:cortical cytoskeleton"/>
    <property type="evidence" value="ECO:0007669"/>
    <property type="project" value="Ensembl"/>
</dbReference>
<dbReference type="GO" id="GO:0008290">
    <property type="term" value="C:F-actin capping protein complex"/>
    <property type="evidence" value="ECO:0007669"/>
    <property type="project" value="Ensembl"/>
</dbReference>
<dbReference type="GO" id="GO:0016020">
    <property type="term" value="C:membrane"/>
    <property type="evidence" value="ECO:0007669"/>
    <property type="project" value="Ensembl"/>
</dbReference>
<dbReference type="GO" id="GO:0051015">
    <property type="term" value="F:actin filament binding"/>
    <property type="evidence" value="ECO:0007669"/>
    <property type="project" value="TreeGrafter"/>
</dbReference>
<dbReference type="GO" id="GO:0030036">
    <property type="term" value="P:actin cytoskeleton organization"/>
    <property type="evidence" value="ECO:0007669"/>
    <property type="project" value="TreeGrafter"/>
</dbReference>
<dbReference type="GO" id="GO:0051016">
    <property type="term" value="P:barbed-end actin filament capping"/>
    <property type="evidence" value="ECO:0007669"/>
    <property type="project" value="InterPro"/>
</dbReference>
<dbReference type="FunFam" id="3.30.1140.60:FF:000001">
    <property type="entry name" value="F-actin-capping protein subunit alpha"/>
    <property type="match status" value="1"/>
</dbReference>
<dbReference type="FunFam" id="3.90.1150.210:FF:000002">
    <property type="entry name" value="F-actin-capping protein subunit alpha"/>
    <property type="match status" value="1"/>
</dbReference>
<dbReference type="Gene3D" id="3.30.1140.60">
    <property type="entry name" value="F-actin capping protein, alpha subunit"/>
    <property type="match status" value="1"/>
</dbReference>
<dbReference type="Gene3D" id="3.90.1150.210">
    <property type="entry name" value="F-actin capping protein, beta subunit"/>
    <property type="match status" value="1"/>
</dbReference>
<dbReference type="InterPro" id="IPR002189">
    <property type="entry name" value="CapZ_alpha"/>
</dbReference>
<dbReference type="InterPro" id="IPR037282">
    <property type="entry name" value="CapZ_alpha/beta"/>
</dbReference>
<dbReference type="InterPro" id="IPR042276">
    <property type="entry name" value="CapZ_alpha/beta_2"/>
</dbReference>
<dbReference type="InterPro" id="IPR042489">
    <property type="entry name" value="CapZ_alpha_1"/>
</dbReference>
<dbReference type="InterPro" id="IPR017865">
    <property type="entry name" value="F-actin_cap_asu_CS"/>
</dbReference>
<dbReference type="PANTHER" id="PTHR10653">
    <property type="entry name" value="F-ACTIN-CAPPING PROTEIN SUBUNIT ALPHA"/>
    <property type="match status" value="1"/>
</dbReference>
<dbReference type="PANTHER" id="PTHR10653:SF2">
    <property type="entry name" value="F-ACTIN-CAPPING PROTEIN SUBUNIT ALPHA-2"/>
    <property type="match status" value="1"/>
</dbReference>
<dbReference type="Pfam" id="PF01267">
    <property type="entry name" value="F-actin_cap_A"/>
    <property type="match status" value="1"/>
</dbReference>
<dbReference type="PRINTS" id="PR00191">
    <property type="entry name" value="FACTINCAPA"/>
</dbReference>
<dbReference type="SUPFAM" id="SSF90096">
    <property type="entry name" value="Subunits of heterodimeric actin filament capping protein Capz"/>
    <property type="match status" value="1"/>
</dbReference>
<dbReference type="PROSITE" id="PS00748">
    <property type="entry name" value="F_ACTIN_CAPPING_A_1"/>
    <property type="match status" value="1"/>
</dbReference>
<dbReference type="PROSITE" id="PS00749">
    <property type="entry name" value="F_ACTIN_CAPPING_A_2"/>
    <property type="match status" value="1"/>
</dbReference>
<feature type="initiator methionine" description="Removed" evidence="2">
    <location>
        <position position="1"/>
    </location>
</feature>
<feature type="chain" id="PRO_0000208630" description="F-actin-capping protein subunit alpha-2">
    <location>
        <begin position="2"/>
        <end position="286"/>
    </location>
</feature>
<feature type="modified residue" description="N-acetylalanine" evidence="2">
    <location>
        <position position="2"/>
    </location>
</feature>
<feature type="modified residue" description="Phosphoserine" evidence="2">
    <location>
        <position position="9"/>
    </location>
</feature>
<feature type="sequence conflict" description="In Ref. 1; CAH93270." evidence="3" ref="1">
    <original>T</original>
    <variation>A</variation>
    <location>
        <position position="142"/>
    </location>
</feature>
<proteinExistence type="evidence at transcript level"/>
<name>CAZA2_PONAB</name>
<comment type="function">
    <text evidence="1">F-actin-capping proteins bind in a Ca(2+)-independent manner to the fast growing ends of actin filaments (barbed end) thereby blocking the exchange of subunits at these ends. Unlike other capping proteins (such as gelsolin and severin), these proteins do not sever actin filaments (By similarity).</text>
</comment>
<comment type="subunit">
    <text evidence="1">Component of the F-actin capping complex, composed of a heterodimer of an alpha and a beta subunit. Component of the WASH complex, composed of F-actin-capping protein subunit alpha (CAPZA1, CAPZA2 or CAPZA3), F-actin-capping protein subunit beta (CAPZB), WASHC1, WASHC2, WASHC3, WASHC4 and WASHC5. Interacts with RCSD1/CAPZIP (By similarity).</text>
</comment>
<comment type="similarity">
    <text evidence="3">Belongs to the F-actin-capping protein alpha subunit family.</text>
</comment>
<sequence>MADLEEQLSDEEKVRIAAKFIIHAPPGEFNEVFNDVRLLLNNDNLLREGAAHAFAQYNLDQFTPVKIEGYEDQVLITEHGDLGNGKFLDPKNRICFKFDHLRKEATDPRPCEVENAVESWRTSVETALRAYVKEHYPNGVCTVYGKKIDGQQTIIACIESHQFQAKNFWNGRWRSEWKFTITPSTTQVVGILKIQVHYYEDGNVQLVSHKDIQDSLTVSNEVQTAKEFIKIVEAAENEYQTAISENYQTMSDTTFKALRRQLPVTRTKIDWNKILSYKIGKEMQNA</sequence>
<reference key="1">
    <citation type="submission" date="2004-11" db="EMBL/GenBank/DDBJ databases">
        <authorList>
            <consortium name="The German cDNA consortium"/>
        </authorList>
    </citation>
    <scope>NUCLEOTIDE SEQUENCE [LARGE SCALE MRNA]</scope>
    <source>
        <tissue>Brain cortex</tissue>
    </source>
</reference>
<reference key="2">
    <citation type="submission" date="2006-01" db="EMBL/GenBank/DDBJ databases">
        <title>NISC comparative sequencing initiative.</title>
        <authorList>
            <person name="Antonellis A."/>
            <person name="Ayele K."/>
            <person name="Benjamin B."/>
            <person name="Blakesley R.W."/>
            <person name="Boakye A."/>
            <person name="Bouffard G.G."/>
            <person name="Brinkley C."/>
            <person name="Brooks S."/>
            <person name="Chu G."/>
            <person name="Coleman H."/>
            <person name="Engle J."/>
            <person name="Gestole M."/>
            <person name="Greene A."/>
            <person name="Guan X."/>
            <person name="Gupta J."/>
            <person name="Haghighi P."/>
            <person name="Han J."/>
            <person name="Hansen N."/>
            <person name="Ho S.-L."/>
            <person name="Hu P."/>
            <person name="Hunter G."/>
            <person name="Hurle B."/>
            <person name="Idol J.R."/>
            <person name="Kwong P."/>
            <person name="Laric P."/>
            <person name="Larson S."/>
            <person name="Lee-Lin S.-Q."/>
            <person name="Legaspi R."/>
            <person name="Madden M."/>
            <person name="Maduro Q.L."/>
            <person name="Maduro V.B."/>
            <person name="Margulies E.H."/>
            <person name="Masiello C."/>
            <person name="Maskeri B."/>
            <person name="McDowell J."/>
            <person name="Mojidi H.A."/>
            <person name="Mullikin J.C."/>
            <person name="Oestreicher J.S."/>
            <person name="Park M."/>
            <person name="Portnoy M.E."/>
            <person name="Prasad A."/>
            <person name="Puri O."/>
            <person name="Reddix-Dugue N."/>
            <person name="Schandler K."/>
            <person name="Schueler M.G."/>
            <person name="Sison C."/>
            <person name="Stantripop S."/>
            <person name="Stephen E."/>
            <person name="Taye A."/>
            <person name="Thomas J.W."/>
            <person name="Thomas P.J."/>
            <person name="Tsipouri V."/>
            <person name="Ung L."/>
            <person name="Vogt J.L."/>
            <person name="Wetherby K.D."/>
            <person name="Young A."/>
            <person name="Green E.D."/>
        </authorList>
    </citation>
    <scope>NUCLEOTIDE SEQUENCE [LARGE SCALE GENOMIC DNA]</scope>
</reference>
<organism>
    <name type="scientific">Pongo abelii</name>
    <name type="common">Sumatran orangutan</name>
    <name type="synonym">Pongo pygmaeus abelii</name>
    <dbReference type="NCBI Taxonomy" id="9601"/>
    <lineage>
        <taxon>Eukaryota</taxon>
        <taxon>Metazoa</taxon>
        <taxon>Chordata</taxon>
        <taxon>Craniata</taxon>
        <taxon>Vertebrata</taxon>
        <taxon>Euteleostomi</taxon>
        <taxon>Mammalia</taxon>
        <taxon>Eutheria</taxon>
        <taxon>Euarchontoglires</taxon>
        <taxon>Primates</taxon>
        <taxon>Haplorrhini</taxon>
        <taxon>Catarrhini</taxon>
        <taxon>Hominidae</taxon>
        <taxon>Pongo</taxon>
    </lineage>
</organism>